<reference key="1">
    <citation type="journal article" date="2008" name="J. Bacteriol.">
        <title>The genome of Heliobacterium modesticaldum, a phototrophic representative of the Firmicutes containing the simplest photosynthetic apparatus.</title>
        <authorList>
            <person name="Sattley W.M."/>
            <person name="Madigan M.T."/>
            <person name="Swingley W.D."/>
            <person name="Cheung P.C."/>
            <person name="Clocksin K.M."/>
            <person name="Conrad A.L."/>
            <person name="Dejesa L.C."/>
            <person name="Honchak B.M."/>
            <person name="Jung D.O."/>
            <person name="Karbach L.E."/>
            <person name="Kurdoglu A."/>
            <person name="Lahiri S."/>
            <person name="Mastrian S.D."/>
            <person name="Page L.E."/>
            <person name="Taylor H.L."/>
            <person name="Wang Z.T."/>
            <person name="Raymond J."/>
            <person name="Chen M."/>
            <person name="Blankenship R.E."/>
            <person name="Touchman J.W."/>
        </authorList>
    </citation>
    <scope>NUCLEOTIDE SEQUENCE [LARGE SCALE GENOMIC DNA]</scope>
    <source>
        <strain>ATCC 51547 / Ice1</strain>
    </source>
</reference>
<sequence length="152" mass="17916">MRCCYCGHGESKVLETRSAEEGRVIRRRRECMECNRRFTTLERIEETPLIVRKKGGSLEAFDRNKLLSGLLKACEKRPIPLDRLEELVTTVERDLRSQYDREVPSREIGEMLMARLRNIDEVAYVRFASVYRQFTDVGRFLEELEGLLKRKT</sequence>
<protein>
    <recommendedName>
        <fullName evidence="1">Transcriptional repressor NrdR</fullName>
    </recommendedName>
</protein>
<proteinExistence type="inferred from homology"/>
<feature type="chain" id="PRO_1000124513" description="Transcriptional repressor NrdR">
    <location>
        <begin position="1"/>
        <end position="152"/>
    </location>
</feature>
<feature type="domain" description="ATP-cone" evidence="1">
    <location>
        <begin position="49"/>
        <end position="139"/>
    </location>
</feature>
<feature type="zinc finger region" evidence="1">
    <location>
        <begin position="3"/>
        <end position="34"/>
    </location>
</feature>
<gene>
    <name evidence="1" type="primary">nrdR</name>
    <name type="ordered locus">Helmi_20010</name>
    <name type="ORF">HM1_2069</name>
</gene>
<keyword id="KW-0067">ATP-binding</keyword>
<keyword id="KW-0238">DNA-binding</keyword>
<keyword id="KW-0479">Metal-binding</keyword>
<keyword id="KW-0547">Nucleotide-binding</keyword>
<keyword id="KW-1185">Reference proteome</keyword>
<keyword id="KW-0678">Repressor</keyword>
<keyword id="KW-0804">Transcription</keyword>
<keyword id="KW-0805">Transcription regulation</keyword>
<keyword id="KW-0862">Zinc</keyword>
<keyword id="KW-0863">Zinc-finger</keyword>
<comment type="function">
    <text evidence="1">Negatively regulates transcription of bacterial ribonucleotide reductase nrd genes and operons by binding to NrdR-boxes.</text>
</comment>
<comment type="cofactor">
    <cofactor evidence="1">
        <name>Zn(2+)</name>
        <dbReference type="ChEBI" id="CHEBI:29105"/>
    </cofactor>
    <text evidence="1">Binds 1 zinc ion.</text>
</comment>
<comment type="similarity">
    <text evidence="1">Belongs to the NrdR family.</text>
</comment>
<name>NRDR_HELMI</name>
<evidence type="ECO:0000255" key="1">
    <source>
        <dbReference type="HAMAP-Rule" id="MF_00440"/>
    </source>
</evidence>
<accession>B0TGD0</accession>
<dbReference type="EMBL" id="CP000930">
    <property type="protein sequence ID" value="ABZ84626.1"/>
    <property type="molecule type" value="Genomic_DNA"/>
</dbReference>
<dbReference type="RefSeq" id="WP_012283126.1">
    <property type="nucleotide sequence ID" value="NC_010337.2"/>
</dbReference>
<dbReference type="SMR" id="B0TGD0"/>
<dbReference type="STRING" id="498761.HM1_2069"/>
<dbReference type="KEGG" id="hmo:HM1_2069"/>
<dbReference type="eggNOG" id="COG1327">
    <property type="taxonomic scope" value="Bacteria"/>
</dbReference>
<dbReference type="HOGENOM" id="CLU_108412_0_0_9"/>
<dbReference type="OrthoDB" id="9807461at2"/>
<dbReference type="Proteomes" id="UP000008550">
    <property type="component" value="Chromosome"/>
</dbReference>
<dbReference type="GO" id="GO:0005524">
    <property type="term" value="F:ATP binding"/>
    <property type="evidence" value="ECO:0007669"/>
    <property type="project" value="UniProtKB-KW"/>
</dbReference>
<dbReference type="GO" id="GO:0003677">
    <property type="term" value="F:DNA binding"/>
    <property type="evidence" value="ECO:0007669"/>
    <property type="project" value="UniProtKB-KW"/>
</dbReference>
<dbReference type="GO" id="GO:0008270">
    <property type="term" value="F:zinc ion binding"/>
    <property type="evidence" value="ECO:0007669"/>
    <property type="project" value="UniProtKB-UniRule"/>
</dbReference>
<dbReference type="GO" id="GO:0045892">
    <property type="term" value="P:negative regulation of DNA-templated transcription"/>
    <property type="evidence" value="ECO:0007669"/>
    <property type="project" value="UniProtKB-UniRule"/>
</dbReference>
<dbReference type="HAMAP" id="MF_00440">
    <property type="entry name" value="NrdR"/>
    <property type="match status" value="1"/>
</dbReference>
<dbReference type="InterPro" id="IPR005144">
    <property type="entry name" value="ATP-cone_dom"/>
</dbReference>
<dbReference type="InterPro" id="IPR055173">
    <property type="entry name" value="NrdR-like_N"/>
</dbReference>
<dbReference type="InterPro" id="IPR003796">
    <property type="entry name" value="RNR_NrdR-like"/>
</dbReference>
<dbReference type="NCBIfam" id="TIGR00244">
    <property type="entry name" value="transcriptional regulator NrdR"/>
    <property type="match status" value="1"/>
</dbReference>
<dbReference type="PANTHER" id="PTHR30455">
    <property type="entry name" value="TRANSCRIPTIONAL REPRESSOR NRDR"/>
    <property type="match status" value="1"/>
</dbReference>
<dbReference type="PANTHER" id="PTHR30455:SF2">
    <property type="entry name" value="TRANSCRIPTIONAL REPRESSOR NRDR"/>
    <property type="match status" value="1"/>
</dbReference>
<dbReference type="Pfam" id="PF03477">
    <property type="entry name" value="ATP-cone"/>
    <property type="match status" value="1"/>
</dbReference>
<dbReference type="Pfam" id="PF22811">
    <property type="entry name" value="Zn_ribbon_NrdR"/>
    <property type="match status" value="1"/>
</dbReference>
<dbReference type="PROSITE" id="PS51161">
    <property type="entry name" value="ATP_CONE"/>
    <property type="match status" value="1"/>
</dbReference>
<organism>
    <name type="scientific">Heliobacterium modesticaldum (strain ATCC 51547 / Ice1)</name>
    <dbReference type="NCBI Taxonomy" id="498761"/>
    <lineage>
        <taxon>Bacteria</taxon>
        <taxon>Bacillati</taxon>
        <taxon>Bacillota</taxon>
        <taxon>Clostridia</taxon>
        <taxon>Eubacteriales</taxon>
        <taxon>Heliobacteriaceae</taxon>
        <taxon>Heliomicrobium</taxon>
    </lineage>
</organism>